<sequence>MASSLTCTGVIWALLSFLSAATSCVGFFMPYWLWGSQLGKPVSFGTFRRCSYPVHDESRQMMVMVEECGRYASFQGIPSTEWRICTIVTGLGCGLLLLVALTALMGCCVSELISRTVGRVAGGIQFLGGLLIGAGCALYPLGWDSEEVRQTCGYISGQFDLGKCEIGWAYYCTGAGAAAAMLLCTWMACFSGKKQKHYPY</sequence>
<protein>
    <recommendedName>
        <fullName evidence="1">LHFPL tetraspan subfamily member 6 protein</fullName>
    </recommendedName>
    <alternativeName>
        <fullName evidence="4">Lipoma HMGIC fusion partner</fullName>
    </alternativeName>
</protein>
<proteinExistence type="evidence at transcript level"/>
<gene>
    <name evidence="1" type="primary">Lhfpl6</name>
    <name evidence="4" type="synonym">Lhfp</name>
</gene>
<feature type="signal peptide" evidence="2">
    <location>
        <begin position="1"/>
        <end position="23"/>
    </location>
</feature>
<feature type="chain" id="PRO_0000244757" description="LHFPL tetraspan subfamily member 6 protein">
    <location>
        <begin position="24"/>
        <end position="200"/>
    </location>
</feature>
<feature type="transmembrane region" description="Helical" evidence="2">
    <location>
        <begin position="84"/>
        <end position="104"/>
    </location>
</feature>
<feature type="transmembrane region" description="Helical" evidence="2">
    <location>
        <begin position="123"/>
        <end position="143"/>
    </location>
</feature>
<feature type="transmembrane region" description="Helical" evidence="2">
    <location>
        <begin position="166"/>
        <end position="186"/>
    </location>
</feature>
<feature type="sequence conflict" description="In Ref. 2; BAE35174." evidence="3" ref="2">
    <original>L</original>
    <variation>P</variation>
    <location>
        <position position="95"/>
    </location>
</feature>
<accession>Q8BM86</accession>
<accession>Q3T9G7</accession>
<accession>Q3TWU2</accession>
<evidence type="ECO:0000250" key="1">
    <source>
        <dbReference type="UniProtKB" id="Q9Y693"/>
    </source>
</evidence>
<evidence type="ECO:0000255" key="2"/>
<evidence type="ECO:0000305" key="3"/>
<evidence type="ECO:0000312" key="4">
    <source>
        <dbReference type="MGI" id="MGI:1920048"/>
    </source>
</evidence>
<organism>
    <name type="scientific">Mus musculus</name>
    <name type="common">Mouse</name>
    <dbReference type="NCBI Taxonomy" id="10090"/>
    <lineage>
        <taxon>Eukaryota</taxon>
        <taxon>Metazoa</taxon>
        <taxon>Chordata</taxon>
        <taxon>Craniata</taxon>
        <taxon>Vertebrata</taxon>
        <taxon>Euteleostomi</taxon>
        <taxon>Mammalia</taxon>
        <taxon>Eutheria</taxon>
        <taxon>Euarchontoglires</taxon>
        <taxon>Glires</taxon>
        <taxon>Rodentia</taxon>
        <taxon>Myomorpha</taxon>
        <taxon>Muroidea</taxon>
        <taxon>Muridae</taxon>
        <taxon>Murinae</taxon>
        <taxon>Mus</taxon>
        <taxon>Mus</taxon>
    </lineage>
</organism>
<dbReference type="EMBL" id="AK034532">
    <property type="protein sequence ID" value="BAC28745.1"/>
    <property type="molecule type" value="mRNA"/>
</dbReference>
<dbReference type="EMBL" id="AK159126">
    <property type="protein sequence ID" value="BAE34840.1"/>
    <property type="molecule type" value="mRNA"/>
</dbReference>
<dbReference type="EMBL" id="AK159549">
    <property type="protein sequence ID" value="BAE35174.1"/>
    <property type="molecule type" value="mRNA"/>
</dbReference>
<dbReference type="EMBL" id="AK172390">
    <property type="protein sequence ID" value="BAE42980.1"/>
    <property type="molecule type" value="mRNA"/>
</dbReference>
<dbReference type="EMBL" id="AK172532">
    <property type="protein sequence ID" value="BAE43053.1"/>
    <property type="molecule type" value="mRNA"/>
</dbReference>
<dbReference type="EMBL" id="BC052079">
    <property type="protein sequence ID" value="AAH52079.1"/>
    <property type="molecule type" value="mRNA"/>
</dbReference>
<dbReference type="EMBL" id="BC095934">
    <property type="protein sequence ID" value="AAH95934.1"/>
    <property type="molecule type" value="mRNA"/>
</dbReference>
<dbReference type="CCDS" id="CCDS17344.1"/>
<dbReference type="RefSeq" id="NP_780595.1">
    <property type="nucleotide sequence ID" value="NM_175386.3"/>
</dbReference>
<dbReference type="SMR" id="Q8BM86"/>
<dbReference type="FunCoup" id="Q8BM86">
    <property type="interactions" value="617"/>
</dbReference>
<dbReference type="STRING" id="10090.ENSMUSP00000056364"/>
<dbReference type="PhosphoSitePlus" id="Q8BM86"/>
<dbReference type="SwissPalm" id="Q8BM86"/>
<dbReference type="PaxDb" id="10090-ENSMUSP00000056364"/>
<dbReference type="PeptideAtlas" id="Q8BM86"/>
<dbReference type="ProteomicsDB" id="252471"/>
<dbReference type="Pumba" id="Q8BM86"/>
<dbReference type="Antibodypedia" id="67484">
    <property type="antibodies" value="81 antibodies from 13 providers"/>
</dbReference>
<dbReference type="DNASU" id="108927"/>
<dbReference type="Ensembl" id="ENSMUST00000059562.14">
    <property type="protein sequence ID" value="ENSMUSP00000056364.8"/>
    <property type="gene ID" value="ENSMUSG00000048332.14"/>
</dbReference>
<dbReference type="Ensembl" id="ENSMUST00000147139.2">
    <property type="protein sequence ID" value="ENSMUSP00000119019.2"/>
    <property type="gene ID" value="ENSMUSG00000048332.14"/>
</dbReference>
<dbReference type="GeneID" id="108927"/>
<dbReference type="KEGG" id="mmu:108927"/>
<dbReference type="UCSC" id="uc008pep.1">
    <property type="organism name" value="mouse"/>
</dbReference>
<dbReference type="AGR" id="MGI:1920048"/>
<dbReference type="CTD" id="10186"/>
<dbReference type="MGI" id="MGI:1920048">
    <property type="gene designation" value="Lhfpl6"/>
</dbReference>
<dbReference type="VEuPathDB" id="HostDB:ENSMUSG00000048332"/>
<dbReference type="eggNOG" id="KOG4026">
    <property type="taxonomic scope" value="Eukaryota"/>
</dbReference>
<dbReference type="GeneTree" id="ENSGT00990000203589"/>
<dbReference type="HOGENOM" id="CLU_084868_2_0_1"/>
<dbReference type="InParanoid" id="Q8BM86"/>
<dbReference type="OMA" id="QWRICTV"/>
<dbReference type="OrthoDB" id="9938692at2759"/>
<dbReference type="PhylomeDB" id="Q8BM86"/>
<dbReference type="TreeFam" id="TF321143"/>
<dbReference type="BioGRID-ORCS" id="108927">
    <property type="hits" value="3 hits in 78 CRISPR screens"/>
</dbReference>
<dbReference type="ChiTaRS" id="Lhfp">
    <property type="organism name" value="mouse"/>
</dbReference>
<dbReference type="PRO" id="PR:Q8BM86"/>
<dbReference type="Proteomes" id="UP000000589">
    <property type="component" value="Chromosome 3"/>
</dbReference>
<dbReference type="RNAct" id="Q8BM86">
    <property type="molecule type" value="protein"/>
</dbReference>
<dbReference type="Bgee" id="ENSMUSG00000048332">
    <property type="expression patterns" value="Expressed in ascending aorta and 235 other cell types or tissues"/>
</dbReference>
<dbReference type="GO" id="GO:0016020">
    <property type="term" value="C:membrane"/>
    <property type="evidence" value="ECO:0007669"/>
    <property type="project" value="UniProtKB-SubCell"/>
</dbReference>
<dbReference type="Gene3D" id="1.20.140.150">
    <property type="match status" value="1"/>
</dbReference>
<dbReference type="InterPro" id="IPR019372">
    <property type="entry name" value="LHFPL"/>
</dbReference>
<dbReference type="PANTHER" id="PTHR12489:SF12">
    <property type="entry name" value="LHFPL TETRASPAN SUBFAMILY MEMBER 6 PROTEIN"/>
    <property type="match status" value="1"/>
</dbReference>
<dbReference type="PANTHER" id="PTHR12489">
    <property type="entry name" value="LIPOMA HMGIC FUSION PARTNER-LIKE PROTEIN"/>
    <property type="match status" value="1"/>
</dbReference>
<dbReference type="Pfam" id="PF10242">
    <property type="entry name" value="L_HMGIC_fpl"/>
    <property type="match status" value="1"/>
</dbReference>
<keyword id="KW-0472">Membrane</keyword>
<keyword id="KW-1185">Reference proteome</keyword>
<keyword id="KW-0732">Signal</keyword>
<keyword id="KW-0812">Transmembrane</keyword>
<keyword id="KW-1133">Transmembrane helix</keyword>
<name>LHPL6_MOUSE</name>
<reference key="1">
    <citation type="journal article" date="2005" name="Science">
        <title>The transcriptional landscape of the mammalian genome.</title>
        <authorList>
            <person name="Carninci P."/>
            <person name="Kasukawa T."/>
            <person name="Katayama S."/>
            <person name="Gough J."/>
            <person name="Frith M.C."/>
            <person name="Maeda N."/>
            <person name="Oyama R."/>
            <person name="Ravasi T."/>
            <person name="Lenhard B."/>
            <person name="Wells C."/>
            <person name="Kodzius R."/>
            <person name="Shimokawa K."/>
            <person name="Bajic V.B."/>
            <person name="Brenner S.E."/>
            <person name="Batalov S."/>
            <person name="Forrest A.R."/>
            <person name="Zavolan M."/>
            <person name="Davis M.J."/>
            <person name="Wilming L.G."/>
            <person name="Aidinis V."/>
            <person name="Allen J.E."/>
            <person name="Ambesi-Impiombato A."/>
            <person name="Apweiler R."/>
            <person name="Aturaliya R.N."/>
            <person name="Bailey T.L."/>
            <person name="Bansal M."/>
            <person name="Baxter L."/>
            <person name="Beisel K.W."/>
            <person name="Bersano T."/>
            <person name="Bono H."/>
            <person name="Chalk A.M."/>
            <person name="Chiu K.P."/>
            <person name="Choudhary V."/>
            <person name="Christoffels A."/>
            <person name="Clutterbuck D.R."/>
            <person name="Crowe M.L."/>
            <person name="Dalla E."/>
            <person name="Dalrymple B.P."/>
            <person name="de Bono B."/>
            <person name="Della Gatta G."/>
            <person name="di Bernardo D."/>
            <person name="Down T."/>
            <person name="Engstrom P."/>
            <person name="Fagiolini M."/>
            <person name="Faulkner G."/>
            <person name="Fletcher C.F."/>
            <person name="Fukushima T."/>
            <person name="Furuno M."/>
            <person name="Futaki S."/>
            <person name="Gariboldi M."/>
            <person name="Georgii-Hemming P."/>
            <person name="Gingeras T.R."/>
            <person name="Gojobori T."/>
            <person name="Green R.E."/>
            <person name="Gustincich S."/>
            <person name="Harbers M."/>
            <person name="Hayashi Y."/>
            <person name="Hensch T.K."/>
            <person name="Hirokawa N."/>
            <person name="Hill D."/>
            <person name="Huminiecki L."/>
            <person name="Iacono M."/>
            <person name="Ikeo K."/>
            <person name="Iwama A."/>
            <person name="Ishikawa T."/>
            <person name="Jakt M."/>
            <person name="Kanapin A."/>
            <person name="Katoh M."/>
            <person name="Kawasawa Y."/>
            <person name="Kelso J."/>
            <person name="Kitamura H."/>
            <person name="Kitano H."/>
            <person name="Kollias G."/>
            <person name="Krishnan S.P."/>
            <person name="Kruger A."/>
            <person name="Kummerfeld S.K."/>
            <person name="Kurochkin I.V."/>
            <person name="Lareau L.F."/>
            <person name="Lazarevic D."/>
            <person name="Lipovich L."/>
            <person name="Liu J."/>
            <person name="Liuni S."/>
            <person name="McWilliam S."/>
            <person name="Madan Babu M."/>
            <person name="Madera M."/>
            <person name="Marchionni L."/>
            <person name="Matsuda H."/>
            <person name="Matsuzawa S."/>
            <person name="Miki H."/>
            <person name="Mignone F."/>
            <person name="Miyake S."/>
            <person name="Morris K."/>
            <person name="Mottagui-Tabar S."/>
            <person name="Mulder N."/>
            <person name="Nakano N."/>
            <person name="Nakauchi H."/>
            <person name="Ng P."/>
            <person name="Nilsson R."/>
            <person name="Nishiguchi S."/>
            <person name="Nishikawa S."/>
            <person name="Nori F."/>
            <person name="Ohara O."/>
            <person name="Okazaki Y."/>
            <person name="Orlando V."/>
            <person name="Pang K.C."/>
            <person name="Pavan W.J."/>
            <person name="Pavesi G."/>
            <person name="Pesole G."/>
            <person name="Petrovsky N."/>
            <person name="Piazza S."/>
            <person name="Reed J."/>
            <person name="Reid J.F."/>
            <person name="Ring B.Z."/>
            <person name="Ringwald M."/>
            <person name="Rost B."/>
            <person name="Ruan Y."/>
            <person name="Salzberg S.L."/>
            <person name="Sandelin A."/>
            <person name="Schneider C."/>
            <person name="Schoenbach C."/>
            <person name="Sekiguchi K."/>
            <person name="Semple C.A."/>
            <person name="Seno S."/>
            <person name="Sessa L."/>
            <person name="Sheng Y."/>
            <person name="Shibata Y."/>
            <person name="Shimada H."/>
            <person name="Shimada K."/>
            <person name="Silva D."/>
            <person name="Sinclair B."/>
            <person name="Sperling S."/>
            <person name="Stupka E."/>
            <person name="Sugiura K."/>
            <person name="Sultana R."/>
            <person name="Takenaka Y."/>
            <person name="Taki K."/>
            <person name="Tammoja K."/>
            <person name="Tan S.L."/>
            <person name="Tang S."/>
            <person name="Taylor M.S."/>
            <person name="Tegner J."/>
            <person name="Teichmann S.A."/>
            <person name="Ueda H.R."/>
            <person name="van Nimwegen E."/>
            <person name="Verardo R."/>
            <person name="Wei C.L."/>
            <person name="Yagi K."/>
            <person name="Yamanishi H."/>
            <person name="Zabarovsky E."/>
            <person name="Zhu S."/>
            <person name="Zimmer A."/>
            <person name="Hide W."/>
            <person name="Bult C."/>
            <person name="Grimmond S.M."/>
            <person name="Teasdale R.D."/>
            <person name="Liu E.T."/>
            <person name="Brusic V."/>
            <person name="Quackenbush J."/>
            <person name="Wahlestedt C."/>
            <person name="Mattick J.S."/>
            <person name="Hume D.A."/>
            <person name="Kai C."/>
            <person name="Sasaki D."/>
            <person name="Tomaru Y."/>
            <person name="Fukuda S."/>
            <person name="Kanamori-Katayama M."/>
            <person name="Suzuki M."/>
            <person name="Aoki J."/>
            <person name="Arakawa T."/>
            <person name="Iida J."/>
            <person name="Imamura K."/>
            <person name="Itoh M."/>
            <person name="Kato T."/>
            <person name="Kawaji H."/>
            <person name="Kawagashira N."/>
            <person name="Kawashima T."/>
            <person name="Kojima M."/>
            <person name="Kondo S."/>
            <person name="Konno H."/>
            <person name="Nakano K."/>
            <person name="Ninomiya N."/>
            <person name="Nishio T."/>
            <person name="Okada M."/>
            <person name="Plessy C."/>
            <person name="Shibata K."/>
            <person name="Shiraki T."/>
            <person name="Suzuki S."/>
            <person name="Tagami M."/>
            <person name="Waki K."/>
            <person name="Watahiki A."/>
            <person name="Okamura-Oho Y."/>
            <person name="Suzuki H."/>
            <person name="Kawai J."/>
            <person name="Hayashizaki Y."/>
        </authorList>
    </citation>
    <scope>NUCLEOTIDE SEQUENCE [LARGE SCALE MRNA]</scope>
    <source>
        <strain>C57BL/6J</strain>
        <strain>NOD</strain>
        <tissue>Spleen</tissue>
    </source>
</reference>
<reference key="2">
    <citation type="journal article" date="2004" name="Genome Res.">
        <title>The status, quality, and expansion of the NIH full-length cDNA project: the Mammalian Gene Collection (MGC).</title>
        <authorList>
            <consortium name="The MGC Project Team"/>
        </authorList>
    </citation>
    <scope>NUCLEOTIDE SEQUENCE [LARGE SCALE MRNA]</scope>
    <source>
        <strain>129</strain>
        <strain>C57BL/6J</strain>
        <tissue>Brain</tissue>
        <tissue>Mammary tumor</tissue>
    </source>
</reference>
<comment type="subcellular location">
    <subcellularLocation>
        <location evidence="3">Membrane</location>
        <topology evidence="3">Multi-pass membrane protein</topology>
    </subcellularLocation>
</comment>
<comment type="similarity">
    <text evidence="3">Belongs to the LHFP family.</text>
</comment>